<organism>
    <name type="scientific">Schizosaccharomyces pombe (strain 972 / ATCC 24843)</name>
    <name type="common">Fission yeast</name>
    <dbReference type="NCBI Taxonomy" id="284812"/>
    <lineage>
        <taxon>Eukaryota</taxon>
        <taxon>Fungi</taxon>
        <taxon>Dikarya</taxon>
        <taxon>Ascomycota</taxon>
        <taxon>Taphrinomycotina</taxon>
        <taxon>Schizosaccharomycetes</taxon>
        <taxon>Schizosaccharomycetales</taxon>
        <taxon>Schizosaccharomycetaceae</taxon>
        <taxon>Schizosaccharomyces</taxon>
    </lineage>
</organism>
<gene>
    <name type="primary">sui1</name>
    <name type="synonym">psu1</name>
    <name type="ORF">SPBC23G7.05</name>
</gene>
<reference key="1">
    <citation type="submission" date="1997-03" db="EMBL/GenBank/DDBJ databases">
        <title>Isolation and characterization of a fission yeast gene highly homologous to the budding yeast sui1 gene.</title>
        <authorList>
            <person name="Ueki K."/>
            <person name="Ishiguro J."/>
        </authorList>
    </citation>
    <scope>NUCLEOTIDE SEQUENCE [GENOMIC DNA]</scope>
    <source>
        <strain>972 / ATCC 24843</strain>
    </source>
</reference>
<reference key="2">
    <citation type="journal article" date="2002" name="Nature">
        <title>The genome sequence of Schizosaccharomyces pombe.</title>
        <authorList>
            <person name="Wood V."/>
            <person name="Gwilliam R."/>
            <person name="Rajandream M.A."/>
            <person name="Lyne M.H."/>
            <person name="Lyne R."/>
            <person name="Stewart A."/>
            <person name="Sgouros J.G."/>
            <person name="Peat N."/>
            <person name="Hayles J."/>
            <person name="Baker S.G."/>
            <person name="Basham D."/>
            <person name="Bowman S."/>
            <person name="Brooks K."/>
            <person name="Brown D."/>
            <person name="Brown S."/>
            <person name="Chillingworth T."/>
            <person name="Churcher C.M."/>
            <person name="Collins M."/>
            <person name="Connor R."/>
            <person name="Cronin A."/>
            <person name="Davis P."/>
            <person name="Feltwell T."/>
            <person name="Fraser A."/>
            <person name="Gentles S."/>
            <person name="Goble A."/>
            <person name="Hamlin N."/>
            <person name="Harris D.E."/>
            <person name="Hidalgo J."/>
            <person name="Hodgson G."/>
            <person name="Holroyd S."/>
            <person name="Hornsby T."/>
            <person name="Howarth S."/>
            <person name="Huckle E.J."/>
            <person name="Hunt S."/>
            <person name="Jagels K."/>
            <person name="James K.D."/>
            <person name="Jones L."/>
            <person name="Jones M."/>
            <person name="Leather S."/>
            <person name="McDonald S."/>
            <person name="McLean J."/>
            <person name="Mooney P."/>
            <person name="Moule S."/>
            <person name="Mungall K.L."/>
            <person name="Murphy L.D."/>
            <person name="Niblett D."/>
            <person name="Odell C."/>
            <person name="Oliver K."/>
            <person name="O'Neil S."/>
            <person name="Pearson D."/>
            <person name="Quail M.A."/>
            <person name="Rabbinowitsch E."/>
            <person name="Rutherford K.M."/>
            <person name="Rutter S."/>
            <person name="Saunders D."/>
            <person name="Seeger K."/>
            <person name="Sharp S."/>
            <person name="Skelton J."/>
            <person name="Simmonds M.N."/>
            <person name="Squares R."/>
            <person name="Squares S."/>
            <person name="Stevens K."/>
            <person name="Taylor K."/>
            <person name="Taylor R.G."/>
            <person name="Tivey A."/>
            <person name="Walsh S.V."/>
            <person name="Warren T."/>
            <person name="Whitehead S."/>
            <person name="Woodward J.R."/>
            <person name="Volckaert G."/>
            <person name="Aert R."/>
            <person name="Robben J."/>
            <person name="Grymonprez B."/>
            <person name="Weltjens I."/>
            <person name="Vanstreels E."/>
            <person name="Rieger M."/>
            <person name="Schaefer M."/>
            <person name="Mueller-Auer S."/>
            <person name="Gabel C."/>
            <person name="Fuchs M."/>
            <person name="Duesterhoeft A."/>
            <person name="Fritzc C."/>
            <person name="Holzer E."/>
            <person name="Moestl D."/>
            <person name="Hilbert H."/>
            <person name="Borzym K."/>
            <person name="Langer I."/>
            <person name="Beck A."/>
            <person name="Lehrach H."/>
            <person name="Reinhardt R."/>
            <person name="Pohl T.M."/>
            <person name="Eger P."/>
            <person name="Zimmermann W."/>
            <person name="Wedler H."/>
            <person name="Wambutt R."/>
            <person name="Purnelle B."/>
            <person name="Goffeau A."/>
            <person name="Cadieu E."/>
            <person name="Dreano S."/>
            <person name="Gloux S."/>
            <person name="Lelaure V."/>
            <person name="Mottier S."/>
            <person name="Galibert F."/>
            <person name="Aves S.J."/>
            <person name="Xiang Z."/>
            <person name="Hunt C."/>
            <person name="Moore K."/>
            <person name="Hurst S.M."/>
            <person name="Lucas M."/>
            <person name="Rochet M."/>
            <person name="Gaillardin C."/>
            <person name="Tallada V.A."/>
            <person name="Garzon A."/>
            <person name="Thode G."/>
            <person name="Daga R.R."/>
            <person name="Cruzado L."/>
            <person name="Jimenez J."/>
            <person name="Sanchez M."/>
            <person name="del Rey F."/>
            <person name="Benito J."/>
            <person name="Dominguez A."/>
            <person name="Revuelta J.L."/>
            <person name="Moreno S."/>
            <person name="Armstrong J."/>
            <person name="Forsburg S.L."/>
            <person name="Cerutti L."/>
            <person name="Lowe T."/>
            <person name="McCombie W.R."/>
            <person name="Paulsen I."/>
            <person name="Potashkin J."/>
            <person name="Shpakovski G.V."/>
            <person name="Ussery D."/>
            <person name="Barrell B.G."/>
            <person name="Nurse P."/>
        </authorList>
    </citation>
    <scope>NUCLEOTIDE SEQUENCE [LARGE SCALE GENOMIC DNA]</scope>
    <source>
        <strain>972 / ATCC 24843</strain>
    </source>
</reference>
<dbReference type="EMBL" id="AB001574">
    <property type="protein sequence ID" value="BAA74836.1"/>
    <property type="status" value="ALT_SEQ"/>
    <property type="molecule type" value="Genomic_DNA"/>
</dbReference>
<dbReference type="EMBL" id="CU329671">
    <property type="protein sequence ID" value="CAA22621.1"/>
    <property type="molecule type" value="Genomic_DNA"/>
</dbReference>
<dbReference type="PIR" id="T39951">
    <property type="entry name" value="T39951"/>
</dbReference>
<dbReference type="RefSeq" id="NP_595863.1">
    <property type="nucleotide sequence ID" value="NM_001021768.2"/>
</dbReference>
<dbReference type="SMR" id="P79060"/>
<dbReference type="BioGRID" id="277197">
    <property type="interactions" value="2"/>
</dbReference>
<dbReference type="FunCoup" id="P79060">
    <property type="interactions" value="334"/>
</dbReference>
<dbReference type="STRING" id="284812.P79060"/>
<dbReference type="iPTMnet" id="P79060"/>
<dbReference type="PaxDb" id="4896-SPBC23G7.05.1"/>
<dbReference type="EnsemblFungi" id="SPBC23G7.05.1">
    <property type="protein sequence ID" value="SPBC23G7.05.1:pep"/>
    <property type="gene ID" value="SPBC23G7.05"/>
</dbReference>
<dbReference type="GeneID" id="2540672"/>
<dbReference type="KEGG" id="spo:2540672"/>
<dbReference type="PomBase" id="SPBC23G7.05">
    <property type="gene designation" value="sui1"/>
</dbReference>
<dbReference type="VEuPathDB" id="FungiDB:SPBC23G7.05"/>
<dbReference type="eggNOG" id="KOG1770">
    <property type="taxonomic scope" value="Eukaryota"/>
</dbReference>
<dbReference type="HOGENOM" id="CLU_082805_3_2_1"/>
<dbReference type="InParanoid" id="P79060"/>
<dbReference type="OMA" id="CEFMITQ"/>
<dbReference type="PhylomeDB" id="P79060"/>
<dbReference type="PRO" id="PR:P79060"/>
<dbReference type="Proteomes" id="UP000002485">
    <property type="component" value="Chromosome II"/>
</dbReference>
<dbReference type="GO" id="GO:0005829">
    <property type="term" value="C:cytosol"/>
    <property type="evidence" value="ECO:0007005"/>
    <property type="project" value="PomBase"/>
</dbReference>
<dbReference type="GO" id="GO:0016282">
    <property type="term" value="C:eukaryotic 43S preinitiation complex"/>
    <property type="evidence" value="ECO:0000318"/>
    <property type="project" value="GO_Central"/>
</dbReference>
<dbReference type="GO" id="GO:0043024">
    <property type="term" value="F:ribosomal small subunit binding"/>
    <property type="evidence" value="ECO:0000318"/>
    <property type="project" value="GO_Central"/>
</dbReference>
<dbReference type="GO" id="GO:0003723">
    <property type="term" value="F:RNA binding"/>
    <property type="evidence" value="ECO:0000318"/>
    <property type="project" value="GO_Central"/>
</dbReference>
<dbReference type="GO" id="GO:0003743">
    <property type="term" value="F:translation initiation factor activity"/>
    <property type="evidence" value="ECO:0000318"/>
    <property type="project" value="GO_Central"/>
</dbReference>
<dbReference type="GO" id="GO:0002183">
    <property type="term" value="P:cytoplasmic translational initiation"/>
    <property type="evidence" value="ECO:0000266"/>
    <property type="project" value="PomBase"/>
</dbReference>
<dbReference type="GO" id="GO:0006417">
    <property type="term" value="P:regulation of translation"/>
    <property type="evidence" value="ECO:0007669"/>
    <property type="project" value="UniProtKB-KW"/>
</dbReference>
<dbReference type="CDD" id="cd11566">
    <property type="entry name" value="eIF1_SUI1"/>
    <property type="match status" value="1"/>
</dbReference>
<dbReference type="FunFam" id="3.30.780.10:FF:000005">
    <property type="entry name" value="Sui1 translation initiation factor"/>
    <property type="match status" value="1"/>
</dbReference>
<dbReference type="Gene3D" id="3.30.780.10">
    <property type="entry name" value="SUI1-like domain"/>
    <property type="match status" value="1"/>
</dbReference>
<dbReference type="InterPro" id="IPR001950">
    <property type="entry name" value="SUI1"/>
</dbReference>
<dbReference type="InterPro" id="IPR036877">
    <property type="entry name" value="SUI1_dom_sf"/>
</dbReference>
<dbReference type="InterPro" id="IPR005874">
    <property type="entry name" value="SUI1_euk"/>
</dbReference>
<dbReference type="NCBIfam" id="TIGR01160">
    <property type="entry name" value="SUI1_MOF2"/>
    <property type="match status" value="1"/>
</dbReference>
<dbReference type="PANTHER" id="PTHR10388">
    <property type="entry name" value="EUKARYOTIC TRANSLATION INITIATION FACTOR SUI1"/>
    <property type="match status" value="1"/>
</dbReference>
<dbReference type="Pfam" id="PF01253">
    <property type="entry name" value="SUI1"/>
    <property type="match status" value="1"/>
</dbReference>
<dbReference type="PIRSF" id="PIRSF004499">
    <property type="entry name" value="SUI1_euk"/>
    <property type="match status" value="1"/>
</dbReference>
<dbReference type="SUPFAM" id="SSF55159">
    <property type="entry name" value="eIF1-like"/>
    <property type="match status" value="1"/>
</dbReference>
<dbReference type="PROSITE" id="PS50296">
    <property type="entry name" value="SUI1"/>
    <property type="match status" value="1"/>
</dbReference>
<comment type="function">
    <text evidence="1">Additional factor that functions in concert with eIF-2 and the initiator tRNA in directing the ribosome to the proper start site of translation.</text>
</comment>
<comment type="similarity">
    <text evidence="3">Belongs to the SUI1 family.</text>
</comment>
<evidence type="ECO:0000250" key="1"/>
<evidence type="ECO:0000256" key="2">
    <source>
        <dbReference type="SAM" id="MobiDB-lite"/>
    </source>
</evidence>
<evidence type="ECO:0000305" key="3"/>
<name>SUI1_SCHPO</name>
<keyword id="KW-0648">Protein biosynthesis</keyword>
<keyword id="KW-1185">Reference proteome</keyword>
<keyword id="KW-0810">Translation regulation</keyword>
<feature type="chain" id="PRO_0000130565" description="Protein translation factor sui1">
    <location>
        <begin position="1"/>
        <end position="109"/>
    </location>
</feature>
<feature type="region of interest" description="Disordered" evidence="2">
    <location>
        <begin position="1"/>
        <end position="22"/>
    </location>
</feature>
<protein>
    <recommendedName>
        <fullName>Protein translation factor sui1</fullName>
    </recommendedName>
</protein>
<accession>P79060</accession>
<proteinExistence type="inferred from homology"/>
<sequence length="109" mass="12434">MSAIQNFNTVDPFADTGDDDAQPLNNIHIRIQQRNGRKTLTTVQGLPREFDQKRILRALKKDFACNGTIVKDDDLGEVIQLQGDQRIKVMEFLTQQLGLQKKNIKIHGF</sequence>